<keyword id="KW-0002">3D-structure</keyword>
<keyword id="KW-0167">Capsid protein</keyword>
<keyword id="KW-1165">Clathrin-mediated endocytosis of virus by host</keyword>
<keyword id="KW-0165">Cleavage on pair of basic residues</keyword>
<keyword id="KW-1015">Disulfide bond</keyword>
<keyword id="KW-1262">Eukaryotic host gene expression shutoff by virus</keyword>
<keyword id="KW-1191">Eukaryotic host transcription shutoff by virus</keyword>
<keyword id="KW-1170">Fusion of virus membrane with host endosomal membrane</keyword>
<keyword id="KW-1168">Fusion of virus membrane with host membrane</keyword>
<keyword id="KW-0325">Glycoprotein</keyword>
<keyword id="KW-1032">Host cell membrane</keyword>
<keyword id="KW-1035">Host cytoplasm</keyword>
<keyword id="KW-1190">Host gene expression shutoff by virus</keyword>
<keyword id="KW-1043">Host membrane</keyword>
<keyword id="KW-1048">Host nucleus</keyword>
<keyword id="KW-0945">Host-virus interaction</keyword>
<keyword id="KW-0378">Hydrolase</keyword>
<keyword id="KW-0449">Lipoprotein</keyword>
<keyword id="KW-0472">Membrane</keyword>
<keyword id="KW-0564">Palmitate</keyword>
<keyword id="KW-0597">Phosphoprotein</keyword>
<keyword id="KW-0645">Protease</keyword>
<keyword id="KW-0694">RNA-binding</keyword>
<keyword id="KW-0720">Serine protease</keyword>
<keyword id="KW-1144">T=4 icosahedral capsid protein</keyword>
<keyword id="KW-0812">Transmembrane</keyword>
<keyword id="KW-1133">Transmembrane helix</keyword>
<keyword id="KW-1161">Viral attachment to host cell</keyword>
<keyword id="KW-1234">Viral attachment to host entry receptor</keyword>
<keyword id="KW-0261">Viral envelope protein</keyword>
<keyword id="KW-1162">Viral penetration into host cytoplasm</keyword>
<keyword id="KW-0946">Virion</keyword>
<keyword id="KW-1164">Virus endocytosis by host</keyword>
<keyword id="KW-1160">Virus entry into host cell</keyword>
<accession>P05674</accession>
<dbReference type="EC" id="3.4.21.90" evidence="2"/>
<dbReference type="EMBL" id="X04368">
    <property type="protein sequence ID" value="CAA27883.1"/>
    <property type="molecule type" value="mRNA"/>
</dbReference>
<dbReference type="PIR" id="A27871">
    <property type="entry name" value="VHWVVE"/>
</dbReference>
<dbReference type="PDB" id="1EP5">
    <property type="method" value="X-ray"/>
    <property type="resolution" value="2.30 A"/>
    <property type="chains" value="A/B/C=119-275"/>
</dbReference>
<dbReference type="PDB" id="1EP6">
    <property type="method" value="X-ray"/>
    <property type="resolution" value="2.45 A"/>
    <property type="chains" value="A/B/C=119-275"/>
</dbReference>
<dbReference type="PDB" id="3J0C">
    <property type="method" value="EM"/>
    <property type="chains" value="A/D/G/J=813-1254, B/E/H/K=335-757, C/F/I/L=114-275"/>
</dbReference>
<dbReference type="PDB" id="3J0G">
    <property type="method" value="EM"/>
    <property type="chains" value="M/N/O/P=276-334"/>
</dbReference>
<dbReference type="PDB" id="7FFE">
    <property type="method" value="EM"/>
    <property type="resolution" value="3.50 A"/>
    <property type="chains" value="A/F/K/S=1-275, B/C/G/O=813-1254, I/L/P/T=276-334, J/N/Q/R=335-757"/>
</dbReference>
<dbReference type="PDB" id="7FFF">
    <property type="method" value="EM"/>
    <property type="resolution" value="3.00 A"/>
    <property type="chains" value="A/F/K/S=1-275, B/C/G/O=813-1254, D/E/H/=1-70, I/L/P/T=276-334, J/N/Q/R=335-757"/>
</dbReference>
<dbReference type="PDB" id="7FFL">
    <property type="method" value="EM"/>
    <property type="resolution" value="3.10 A"/>
    <property type="chains" value="A/F/S=1-275, B/C/G=813-1254, D/E/H=1-70, I/P/T=276-334, J/Q/R=335-757"/>
</dbReference>
<dbReference type="PDB" id="7FFN">
    <property type="method" value="EM"/>
    <property type="resolution" value="3.00 A"/>
    <property type="chains" value="K=1-275, L=276-334, M=1-70, N=335-757, O=813-1254"/>
</dbReference>
<dbReference type="PDB" id="7FFO">
    <property type="method" value="EM"/>
    <property type="resolution" value="3.50 A"/>
    <property type="chains" value="K=1-275, L=276-334, N=335-757, J/Q/R=335-757, O=813-1254"/>
</dbReference>
<dbReference type="PDB" id="7FFQ">
    <property type="method" value="EM"/>
    <property type="resolution" value="3.50 A"/>
    <property type="chains" value="A/F/S=1-275, B/C/G=813-1254, I/P/T=276-334"/>
</dbReference>
<dbReference type="PDB" id="7N1I">
    <property type="method" value="EM"/>
    <property type="resolution" value="4.20 A"/>
    <property type="chains" value="A/B/C/D=813-1254, E/F/G/H=335-757, I/J/K/L=114-275"/>
</dbReference>
<dbReference type="PDB" id="7SFU">
    <property type="method" value="EM"/>
    <property type="resolution" value="4.20 A"/>
    <property type="chains" value="A/D/G/J=813-1254, B/E/H/K=335-757, C/F/I/L=114-275"/>
</dbReference>
<dbReference type="PDB" id="7SFV">
    <property type="method" value="EM"/>
    <property type="resolution" value="4.00 A"/>
    <property type="chains" value="A/D/G/J=813-1252, B/E/H/K=335-752, C/F/I/L=117-275"/>
</dbReference>
<dbReference type="PDB" id="7SFW">
    <property type="method" value="EM"/>
    <property type="resolution" value="3.20 A"/>
    <property type="chains" value="A/D/G/J=813-1254, B/E/H/K=335-757, C/F/I/L=1-275"/>
</dbReference>
<dbReference type="PDB" id="8DEQ">
    <property type="method" value="EM"/>
    <property type="resolution" value="6.00 A"/>
    <property type="chains" value="A/B/C/D/E/F=813-1214"/>
</dbReference>
<dbReference type="PDB" id="8DER">
    <property type="method" value="EM"/>
    <property type="resolution" value="3.30 A"/>
    <property type="chains" value="A/B/C=335-679, E/F/G=813-1214"/>
</dbReference>
<dbReference type="PDB" id="8EEU">
    <property type="method" value="EM"/>
    <property type="resolution" value="3.50 A"/>
    <property type="chains" value="A/B/C/D/E/F=1-1254"/>
</dbReference>
<dbReference type="PDB" id="8EEV">
    <property type="method" value="EM"/>
    <property type="resolution" value="3.60 A"/>
    <property type="chains" value="A/B/F/G/J/K=1-1254"/>
</dbReference>
<dbReference type="PDBsum" id="1EP5"/>
<dbReference type="PDBsum" id="1EP6"/>
<dbReference type="PDBsum" id="3J0C"/>
<dbReference type="PDBsum" id="3J0G"/>
<dbReference type="PDBsum" id="7FFE"/>
<dbReference type="PDBsum" id="7FFF"/>
<dbReference type="PDBsum" id="7FFL"/>
<dbReference type="PDBsum" id="7FFN"/>
<dbReference type="PDBsum" id="7FFO"/>
<dbReference type="PDBsum" id="7FFQ"/>
<dbReference type="PDBsum" id="7N1I"/>
<dbReference type="PDBsum" id="7SFU"/>
<dbReference type="PDBsum" id="7SFV"/>
<dbReference type="PDBsum" id="7SFW"/>
<dbReference type="PDBsum" id="8DEQ"/>
<dbReference type="PDBsum" id="8DER"/>
<dbReference type="PDBsum" id="8EEU"/>
<dbReference type="PDBsum" id="8EEV"/>
<dbReference type="EMDB" id="EMD-25102"/>
<dbReference type="EMDB" id="EMD-25103"/>
<dbReference type="EMDB" id="EMD-25104"/>
<dbReference type="EMDB" id="EMD-27395"/>
<dbReference type="EMDB" id="EMD-27396"/>
<dbReference type="EMDB" id="EMD-28058"/>
<dbReference type="EMDB" id="EMD-28060"/>
<dbReference type="EMDB" id="EMD-31566"/>
<dbReference type="EMDB" id="EMD-31567"/>
<dbReference type="EMDB" id="EMD-31568"/>
<dbReference type="EMDB" id="EMD-31569"/>
<dbReference type="EMDB" id="EMD-31570"/>
<dbReference type="EMDB" id="EMD-31571"/>
<dbReference type="SMR" id="P05674"/>
<dbReference type="MEROPS" id="S03.001"/>
<dbReference type="ABCD" id="P05674">
    <property type="antibodies" value="10 sequenced antibodies"/>
</dbReference>
<dbReference type="EvolutionaryTrace" id="P05674"/>
<dbReference type="GO" id="GO:0030430">
    <property type="term" value="C:host cell cytoplasm"/>
    <property type="evidence" value="ECO:0007669"/>
    <property type="project" value="UniProtKB-SubCell"/>
</dbReference>
<dbReference type="GO" id="GO:0042025">
    <property type="term" value="C:host cell nucleus"/>
    <property type="evidence" value="ECO:0007669"/>
    <property type="project" value="UniProtKB-SubCell"/>
</dbReference>
<dbReference type="GO" id="GO:0020002">
    <property type="term" value="C:host cell plasma membrane"/>
    <property type="evidence" value="ECO:0007669"/>
    <property type="project" value="UniProtKB-SubCell"/>
</dbReference>
<dbReference type="GO" id="GO:0016020">
    <property type="term" value="C:membrane"/>
    <property type="evidence" value="ECO:0007669"/>
    <property type="project" value="UniProtKB-KW"/>
</dbReference>
<dbReference type="GO" id="GO:0039619">
    <property type="term" value="C:T=4 icosahedral viral capsid"/>
    <property type="evidence" value="ECO:0007669"/>
    <property type="project" value="UniProtKB-KW"/>
</dbReference>
<dbReference type="GO" id="GO:0019031">
    <property type="term" value="C:viral envelope"/>
    <property type="evidence" value="ECO:0007669"/>
    <property type="project" value="UniProtKB-KW"/>
</dbReference>
<dbReference type="GO" id="GO:0055036">
    <property type="term" value="C:virion membrane"/>
    <property type="evidence" value="ECO:0007669"/>
    <property type="project" value="UniProtKB-SubCell"/>
</dbReference>
<dbReference type="GO" id="GO:0003723">
    <property type="term" value="F:RNA binding"/>
    <property type="evidence" value="ECO:0007669"/>
    <property type="project" value="UniProtKB-KW"/>
</dbReference>
<dbReference type="GO" id="GO:0004252">
    <property type="term" value="F:serine-type endopeptidase activity"/>
    <property type="evidence" value="ECO:0007669"/>
    <property type="project" value="InterPro"/>
</dbReference>
<dbReference type="GO" id="GO:0005198">
    <property type="term" value="F:structural molecule activity"/>
    <property type="evidence" value="ECO:0007669"/>
    <property type="project" value="InterPro"/>
</dbReference>
<dbReference type="GO" id="GO:0075512">
    <property type="term" value="P:clathrin-dependent endocytosis of virus by host cell"/>
    <property type="evidence" value="ECO:0007669"/>
    <property type="project" value="UniProtKB-KW"/>
</dbReference>
<dbReference type="GO" id="GO:0039654">
    <property type="term" value="P:fusion of virus membrane with host endosome membrane"/>
    <property type="evidence" value="ECO:0007669"/>
    <property type="project" value="UniProtKB-KW"/>
</dbReference>
<dbReference type="GO" id="GO:0006508">
    <property type="term" value="P:proteolysis"/>
    <property type="evidence" value="ECO:0007669"/>
    <property type="project" value="UniProtKB-KW"/>
</dbReference>
<dbReference type="GO" id="GO:0039657">
    <property type="term" value="P:symbiont-mediated suppression of host gene expression"/>
    <property type="evidence" value="ECO:0007669"/>
    <property type="project" value="UniProtKB-KW"/>
</dbReference>
<dbReference type="GO" id="GO:0039722">
    <property type="term" value="P:symbiont-mediated suppression of host toll-like receptor signaling pathway"/>
    <property type="evidence" value="ECO:0000250"/>
    <property type="project" value="UniProtKB"/>
</dbReference>
<dbReference type="GO" id="GO:0019062">
    <property type="term" value="P:virion attachment to host cell"/>
    <property type="evidence" value="ECO:0007669"/>
    <property type="project" value="UniProtKB-KW"/>
</dbReference>
<dbReference type="FunFam" id="1.10.287.2230:FF:000001">
    <property type="entry name" value="Structural polyprotein"/>
    <property type="match status" value="1"/>
</dbReference>
<dbReference type="FunFam" id="2.40.10.10:FF:000075">
    <property type="entry name" value="Structural polyprotein"/>
    <property type="match status" value="1"/>
</dbReference>
<dbReference type="FunFam" id="2.40.10.10:FF:000076">
    <property type="entry name" value="Structural polyprotein"/>
    <property type="match status" value="1"/>
</dbReference>
<dbReference type="FunFam" id="2.60.40.350:FF:000002">
    <property type="entry name" value="Structural polyprotein"/>
    <property type="match status" value="1"/>
</dbReference>
<dbReference type="FunFam" id="2.60.98.10:FF:000002">
    <property type="entry name" value="Structural polyprotein"/>
    <property type="match status" value="1"/>
</dbReference>
<dbReference type="Gene3D" id="1.10.287.2230">
    <property type="match status" value="1"/>
</dbReference>
<dbReference type="Gene3D" id="2.60.40.350">
    <property type="match status" value="1"/>
</dbReference>
<dbReference type="Gene3D" id="2.60.40.3200">
    <property type="entry name" value="Alphavirus E2 glycoprotein, A domain"/>
    <property type="match status" value="1"/>
</dbReference>
<dbReference type="Gene3D" id="2.60.40.4310">
    <property type="entry name" value="Alphavirus E2 glycoprotein, domain B"/>
    <property type="match status" value="1"/>
</dbReference>
<dbReference type="Gene3D" id="2.60.40.2400">
    <property type="entry name" value="Alphavirus E2 glycoprotein, domain C"/>
    <property type="match status" value="1"/>
</dbReference>
<dbReference type="Gene3D" id="2.60.98.10">
    <property type="entry name" value="Tick-borne Encephalitis virus Glycoprotein, domain 1"/>
    <property type="match status" value="3"/>
</dbReference>
<dbReference type="Gene3D" id="2.40.10.10">
    <property type="entry name" value="Trypsin-like serine proteases"/>
    <property type="match status" value="2"/>
</dbReference>
<dbReference type="InterPro" id="IPR002548">
    <property type="entry name" value="Alpha_E1_glycop"/>
</dbReference>
<dbReference type="InterPro" id="IPR000936">
    <property type="entry name" value="Alpha_E2_glycop"/>
</dbReference>
<dbReference type="InterPro" id="IPR002533">
    <property type="entry name" value="Alpha_E3_glycop"/>
</dbReference>
<dbReference type="InterPro" id="IPR042304">
    <property type="entry name" value="Alphavir_E2_A"/>
</dbReference>
<dbReference type="InterPro" id="IPR042305">
    <property type="entry name" value="Alphavir_E2_B"/>
</dbReference>
<dbReference type="InterPro" id="IPR042306">
    <property type="entry name" value="Alphavir_E2_C"/>
</dbReference>
<dbReference type="InterPro" id="IPR000336">
    <property type="entry name" value="Flavivir/Alphavir_Ig-like_sf"/>
</dbReference>
<dbReference type="InterPro" id="IPR036253">
    <property type="entry name" value="Glycoprot_cen/dimer_sf"/>
</dbReference>
<dbReference type="InterPro" id="IPR038055">
    <property type="entry name" value="Glycoprot_E_dimer_dom"/>
</dbReference>
<dbReference type="InterPro" id="IPR014756">
    <property type="entry name" value="Ig_E-set"/>
</dbReference>
<dbReference type="InterPro" id="IPR009003">
    <property type="entry name" value="Peptidase_S1_PA"/>
</dbReference>
<dbReference type="InterPro" id="IPR043504">
    <property type="entry name" value="Peptidase_S1_PA_chymotrypsin"/>
</dbReference>
<dbReference type="InterPro" id="IPR000930">
    <property type="entry name" value="Peptidase_S3"/>
</dbReference>
<dbReference type="Pfam" id="PF01589">
    <property type="entry name" value="Alpha_E1_glycop"/>
    <property type="match status" value="1"/>
</dbReference>
<dbReference type="Pfam" id="PF00943">
    <property type="entry name" value="Alpha_E2_glycop"/>
    <property type="match status" value="1"/>
</dbReference>
<dbReference type="Pfam" id="PF01563">
    <property type="entry name" value="Alpha_E3_glycop"/>
    <property type="match status" value="1"/>
</dbReference>
<dbReference type="Pfam" id="PF00944">
    <property type="entry name" value="Peptidase_S3"/>
    <property type="match status" value="1"/>
</dbReference>
<dbReference type="PRINTS" id="PR00798">
    <property type="entry name" value="TOGAVIRIN"/>
</dbReference>
<dbReference type="SUPFAM" id="SSF81296">
    <property type="entry name" value="E set domains"/>
    <property type="match status" value="1"/>
</dbReference>
<dbReference type="SUPFAM" id="SSF50494">
    <property type="entry name" value="Trypsin-like serine proteases"/>
    <property type="match status" value="1"/>
</dbReference>
<dbReference type="SUPFAM" id="SSF56983">
    <property type="entry name" value="Viral glycoprotein, central and dimerisation domains"/>
    <property type="match status" value="1"/>
</dbReference>
<dbReference type="PROSITE" id="PS51690">
    <property type="entry name" value="ALPHAVIRUS_CP"/>
    <property type="match status" value="1"/>
</dbReference>
<feature type="chain" id="PRO_0000041256" description="Capsid protein">
    <location>
        <begin position="1"/>
        <end position="275"/>
    </location>
</feature>
<feature type="chain" id="PRO_0000234319" description="Precursor of protein E3/E2">
    <location>
        <begin position="276"/>
        <end position="757"/>
    </location>
</feature>
<feature type="chain" id="PRO_0000041257" description="Assembly protein E3">
    <location>
        <begin position="276"/>
        <end position="334"/>
    </location>
</feature>
<feature type="chain" id="PRO_0000041258" description="Spike glycoprotein E2">
    <location>
        <begin position="335"/>
        <end position="757"/>
    </location>
</feature>
<feature type="chain" id="PRO_0000041259" description="6K protein">
    <location>
        <begin position="758"/>
        <end position="812"/>
    </location>
</feature>
<feature type="chain" id="PRO_0000041260" description="Spike glycoprotein E1">
    <location>
        <begin position="813"/>
        <end position="1254"/>
    </location>
</feature>
<feature type="topological domain" description="Extracellular" evidence="10">
    <location>
        <begin position="276"/>
        <end position="701"/>
    </location>
</feature>
<feature type="transmembrane region" description="Helical" evidence="10">
    <location>
        <begin position="702"/>
        <end position="722"/>
    </location>
</feature>
<feature type="topological domain" description="Cytoplasmic" evidence="10">
    <location>
        <begin position="723"/>
        <end position="757"/>
    </location>
</feature>
<feature type="topological domain" description="Extracellular" evidence="10">
    <location>
        <begin position="758"/>
        <end position="772"/>
    </location>
</feature>
<feature type="transmembrane region" description="Helical" evidence="10">
    <location>
        <begin position="773"/>
        <end position="793"/>
    </location>
</feature>
<feature type="topological domain" description="Cytoplasmic" evidence="10">
    <location>
        <begin position="794"/>
        <end position="795"/>
    </location>
</feature>
<feature type="transmembrane region" description="Helical" evidence="10">
    <location>
        <begin position="796"/>
        <end position="816"/>
    </location>
</feature>
<feature type="topological domain" description="Extracellular" evidence="10">
    <location>
        <begin position="817"/>
        <end position="1224"/>
    </location>
</feature>
<feature type="transmembrane region" description="Helical" evidence="10">
    <location>
        <begin position="1225"/>
        <end position="1245"/>
    </location>
</feature>
<feature type="topological domain" description="Cytoplasmic" evidence="10">
    <location>
        <begin position="1246"/>
        <end position="1254"/>
    </location>
</feature>
<feature type="domain" description="Peptidase S3" evidence="11">
    <location>
        <begin position="126"/>
        <end position="275"/>
    </location>
</feature>
<feature type="region of interest" description="Necessary for nucleocapsid assembly and virus assembly" evidence="4">
    <location>
        <begin position="1"/>
        <end position="33"/>
    </location>
</feature>
<feature type="region of interest" description="Host transcription inhibition" evidence="4">
    <location>
        <begin position="33"/>
        <end position="68"/>
    </location>
</feature>
<feature type="region of interest" description="Disordered" evidence="12">
    <location>
        <begin position="45"/>
        <end position="119"/>
    </location>
</feature>
<feature type="region of interest" description="Binding to the viral RNA" evidence="5">
    <location>
        <begin position="91"/>
        <end position="127"/>
    </location>
</feature>
<feature type="region of interest" description="Ribosome-binding" evidence="5">
    <location>
        <begin position="112"/>
        <end position="126"/>
    </location>
</feature>
<feature type="region of interest" description="Functions as an uncleaved signal peptide for the precursor of protein E3/E2" evidence="2">
    <location>
        <begin position="276"/>
        <end position="287"/>
    </location>
</feature>
<feature type="region of interest" description="E1 fusion peptide loop" evidence="9">
    <location>
        <begin position="896"/>
        <end position="913"/>
    </location>
</feature>
<feature type="short sequence motif" description="Supraphysiological nuclear export signal" evidence="4">
    <location>
        <begin position="41"/>
        <end position="48"/>
    </location>
</feature>
<feature type="short sequence motif" description="Nuclear localization signal" evidence="4">
    <location>
        <begin position="64"/>
        <end position="68"/>
    </location>
</feature>
<feature type="compositionally biased region" description="Basic residues" evidence="12">
    <location>
        <begin position="80"/>
        <end position="92"/>
    </location>
</feature>
<feature type="compositionally biased region" description="Basic residues" evidence="12">
    <location>
        <begin position="104"/>
        <end position="118"/>
    </location>
</feature>
<feature type="active site" description="Charge relay system" evidence="11">
    <location>
        <position position="152"/>
    </location>
</feature>
<feature type="active site" description="Charge relay system" evidence="11">
    <location>
        <position position="174"/>
    </location>
</feature>
<feature type="active site" description="Charge relay system" evidence="11">
    <location>
        <position position="226"/>
    </location>
</feature>
<feature type="site" description="Involved in dimerization of the capsid protein" evidence="8">
    <location>
        <position position="200"/>
    </location>
</feature>
<feature type="site" description="Involved in dimerization of the capsid protein" evidence="8">
    <location>
        <position position="233"/>
    </location>
</feature>
<feature type="site" description="Cleavage; by autolysis" evidence="2">
    <location>
        <begin position="275"/>
        <end position="276"/>
    </location>
</feature>
<feature type="site" description="Cleavage; by host furin" evidence="2">
    <location>
        <begin position="334"/>
        <end position="335"/>
    </location>
</feature>
<feature type="site" description="Interaction with host receptor LDLRAD3" evidence="13">
    <location>
        <position position="378"/>
    </location>
</feature>
<feature type="site" description="Interaction with host receptor LDLRAD3" evidence="13">
    <location>
        <position position="427"/>
    </location>
</feature>
<feature type="site" description="Interaction with host receptor LDLRAD3" evidence="13">
    <location>
        <position position="487"/>
    </location>
</feature>
<feature type="site" description="Interaction with host receptor LDLRAD3" evidence="13">
    <location>
        <position position="489"/>
    </location>
</feature>
<feature type="site" description="Interaction with host receptor LDLRAD3" evidence="13">
    <location>
        <position position="490"/>
    </location>
</feature>
<feature type="site" description="Interaction with host receptor LDLRAD3" evidence="13">
    <location>
        <position position="596"/>
    </location>
</feature>
<feature type="site" description="Cleavage; by host signal peptidase" evidence="2">
    <location>
        <begin position="757"/>
        <end position="758"/>
    </location>
</feature>
<feature type="site" description="Cleavage; by host signal peptidase" evidence="2">
    <location>
        <begin position="812"/>
        <end position="813"/>
    </location>
</feature>
<feature type="modified residue" description="Phosphothreonine" evidence="4">
    <location>
        <position position="93"/>
    </location>
</feature>
<feature type="modified residue" description="Phosphothreonine" evidence="4">
    <location>
        <position position="108"/>
    </location>
</feature>
<feature type="modified residue" description="Phosphoserine" evidence="4">
    <location>
        <position position="124"/>
    </location>
</feature>
<feature type="modified residue" description="Phosphothreonine" evidence="4">
    <location>
        <position position="127"/>
    </location>
</feature>
<feature type="lipid moiety-binding region" description="S-palmitoyl cysteine; by host" evidence="3">
    <location>
        <position position="730"/>
    </location>
</feature>
<feature type="lipid moiety-binding region" description="S-palmitoyl cysteine; by host" evidence="3">
    <location>
        <position position="750"/>
    </location>
</feature>
<feature type="lipid moiety-binding region" description="S-palmitoyl cysteine; by host" evidence="3">
    <location>
        <position position="751"/>
    </location>
</feature>
<feature type="glycosylation site" description="N-linked (GlcNAc...) asparagine; by host" evidence="10">
    <location>
        <position position="286"/>
    </location>
</feature>
<feature type="glycosylation site" description="N-linked (GlcNAc...) asparagine; by host" evidence="10">
    <location>
        <position position="546"/>
    </location>
</feature>
<feature type="glycosylation site" description="N-linked (GlcNAc...) asparagine; by host" evidence="10">
    <location>
        <position position="652"/>
    </location>
</feature>
<feature type="glycosylation site" description="N-linked (GlcNAc...) asparagine; by host" evidence="10">
    <location>
        <position position="946"/>
    </location>
</feature>
<feature type="disulfide bond" evidence="1">
    <location>
        <begin position="861"/>
        <end position="926"/>
    </location>
</feature>
<feature type="disulfide bond" evidence="1">
    <location>
        <begin position="874"/>
        <end position="906"/>
    </location>
</feature>
<feature type="disulfide bond" evidence="1">
    <location>
        <begin position="875"/>
        <end position="908"/>
    </location>
</feature>
<feature type="disulfide bond" evidence="1">
    <location>
        <begin position="880"/>
        <end position="890"/>
    </location>
</feature>
<feature type="disulfide bond" evidence="1">
    <location>
        <begin position="1071"/>
        <end position="1083"/>
    </location>
</feature>
<feature type="disulfide bond" evidence="1">
    <location>
        <begin position="1113"/>
        <end position="1188"/>
    </location>
</feature>
<feature type="disulfide bond" evidence="1">
    <location>
        <begin position="1118"/>
        <end position="1192"/>
    </location>
</feature>
<feature type="disulfide bond" evidence="1">
    <location>
        <begin position="1140"/>
        <end position="1182"/>
    </location>
</feature>
<feature type="helix" evidence="32">
    <location>
        <begin position="118"/>
        <end position="121"/>
    </location>
</feature>
<feature type="strand" evidence="30">
    <location>
        <begin position="127"/>
        <end position="132"/>
    </location>
</feature>
<feature type="strand" evidence="30">
    <location>
        <begin position="135"/>
        <end position="143"/>
    </location>
</feature>
<feature type="strand" evidence="30">
    <location>
        <begin position="146"/>
        <end position="150"/>
    </location>
</feature>
<feature type="strand" evidence="30">
    <location>
        <begin position="155"/>
        <end position="159"/>
    </location>
</feature>
<feature type="helix" evidence="30">
    <location>
        <begin position="160"/>
        <end position="164"/>
    </location>
</feature>
<feature type="strand" evidence="30">
    <location>
        <begin position="168"/>
        <end position="170"/>
    </location>
</feature>
<feature type="turn" evidence="30">
    <location>
        <begin position="171"/>
        <end position="174"/>
    </location>
</feature>
<feature type="strand" evidence="30">
    <location>
        <begin position="175"/>
        <end position="179"/>
    </location>
</feature>
<feature type="turn" evidence="30">
    <location>
        <begin position="182"/>
        <end position="186"/>
    </location>
</feature>
<feature type="strand" evidence="30">
    <location>
        <begin position="187"/>
        <end position="189"/>
    </location>
</feature>
<feature type="strand" evidence="30">
    <location>
        <begin position="197"/>
        <end position="202"/>
    </location>
</feature>
<feature type="strand" evidence="30">
    <location>
        <begin position="205"/>
        <end position="210"/>
    </location>
</feature>
<feature type="strand" evidence="30">
    <location>
        <begin position="213"/>
        <end position="217"/>
    </location>
</feature>
<feature type="strand" evidence="30">
    <location>
        <begin position="229"/>
        <end position="231"/>
    </location>
</feature>
<feature type="strand" evidence="30">
    <location>
        <begin position="237"/>
        <end position="247"/>
    </location>
</feature>
<feature type="strand" evidence="30">
    <location>
        <begin position="250"/>
        <end position="258"/>
    </location>
</feature>
<feature type="strand" evidence="30">
    <location>
        <begin position="262"/>
        <end position="267"/>
    </location>
</feature>
<feature type="turn" evidence="32">
    <location>
        <begin position="336"/>
        <end position="342"/>
    </location>
</feature>
<feature type="helix" evidence="32">
    <location>
        <begin position="343"/>
        <end position="345"/>
    </location>
</feature>
<feature type="strand" evidence="32">
    <location>
        <begin position="351"/>
        <end position="355"/>
    </location>
</feature>
<feature type="strand" evidence="32">
    <location>
        <begin position="357"/>
        <end position="363"/>
    </location>
</feature>
<feature type="strand" evidence="32">
    <location>
        <begin position="367"/>
        <end position="371"/>
    </location>
</feature>
<feature type="strand" evidence="32">
    <location>
        <begin position="374"/>
        <end position="389"/>
    </location>
</feature>
<feature type="strand" evidence="32">
    <location>
        <begin position="395"/>
        <end position="404"/>
    </location>
</feature>
<feature type="strand" evidence="32">
    <location>
        <begin position="407"/>
        <end position="412"/>
    </location>
</feature>
<feature type="turn" evidence="32">
    <location>
        <begin position="413"/>
        <end position="415"/>
    </location>
</feature>
<feature type="strand" evidence="32">
    <location>
        <begin position="417"/>
        <end position="423"/>
    </location>
</feature>
<feature type="strand" evidence="32">
    <location>
        <begin position="425"/>
        <end position="437"/>
    </location>
</feature>
<feature type="strand" evidence="32">
    <location>
        <begin position="444"/>
        <end position="449"/>
    </location>
</feature>
<feature type="strand" evidence="32">
    <location>
        <begin position="454"/>
        <end position="459"/>
    </location>
</feature>
<feature type="strand" evidence="32">
    <location>
        <begin position="468"/>
        <end position="471"/>
    </location>
</feature>
<feature type="strand" evidence="32">
    <location>
        <begin position="482"/>
        <end position="488"/>
    </location>
</feature>
<feature type="strand" evidence="32">
    <location>
        <begin position="498"/>
        <end position="502"/>
    </location>
</feature>
<feature type="turn" evidence="32">
    <location>
        <begin position="510"/>
        <end position="512"/>
    </location>
</feature>
<feature type="strand" evidence="32">
    <location>
        <begin position="513"/>
        <end position="516"/>
    </location>
</feature>
<feature type="strand" evidence="32">
    <location>
        <begin position="519"/>
        <end position="522"/>
    </location>
</feature>
<feature type="strand" evidence="32">
    <location>
        <begin position="529"/>
        <end position="534"/>
    </location>
</feature>
<feature type="strand" evidence="32">
    <location>
        <begin position="536"/>
        <end position="538"/>
    </location>
</feature>
<feature type="strand" evidence="32">
    <location>
        <begin position="549"/>
        <end position="551"/>
    </location>
</feature>
<feature type="strand" evidence="32">
    <location>
        <begin position="560"/>
        <end position="565"/>
    </location>
</feature>
<feature type="strand" evidence="32">
    <location>
        <begin position="568"/>
        <end position="572"/>
    </location>
</feature>
<feature type="strand" evidence="32">
    <location>
        <begin position="575"/>
        <end position="577"/>
    </location>
</feature>
<feature type="strand" evidence="32">
    <location>
        <begin position="585"/>
        <end position="590"/>
    </location>
</feature>
<feature type="strand" evidence="32">
    <location>
        <begin position="595"/>
        <end position="601"/>
    </location>
</feature>
<feature type="strand" evidence="32">
    <location>
        <begin position="609"/>
        <end position="613"/>
    </location>
</feature>
<feature type="strand" evidence="32">
    <location>
        <begin position="616"/>
        <end position="621"/>
    </location>
</feature>
<feature type="strand" evidence="32">
    <location>
        <begin position="627"/>
        <end position="637"/>
    </location>
</feature>
<feature type="strand" evidence="32">
    <location>
        <begin position="641"/>
        <end position="645"/>
    </location>
</feature>
<feature type="strand" evidence="32">
    <location>
        <begin position="649"/>
        <end position="653"/>
    </location>
</feature>
<feature type="strand" evidence="32">
    <location>
        <begin position="660"/>
        <end position="664"/>
    </location>
</feature>
<feature type="strand" evidence="32">
    <location>
        <begin position="670"/>
        <end position="674"/>
    </location>
</feature>
<feature type="strand" evidence="32">
    <location>
        <begin position="682"/>
        <end position="684"/>
    </location>
</feature>
<feature type="helix" evidence="32">
    <location>
        <begin position="686"/>
        <end position="695"/>
    </location>
</feature>
<feature type="helix" evidence="32">
    <location>
        <begin position="700"/>
        <end position="735"/>
    </location>
</feature>
<feature type="strand" evidence="32">
    <location>
        <begin position="737"/>
        <end position="739"/>
    </location>
</feature>
<feature type="helix" evidence="32">
    <location>
        <begin position="743"/>
        <end position="748"/>
    </location>
</feature>
<feature type="strand" evidence="32">
    <location>
        <begin position="814"/>
        <end position="820"/>
    </location>
</feature>
<feature type="strand" evidence="32">
    <location>
        <begin position="827"/>
        <end position="831"/>
    </location>
</feature>
<feature type="strand" evidence="32">
    <location>
        <begin position="834"/>
        <end position="836"/>
    </location>
</feature>
<feature type="strand" evidence="32">
    <location>
        <begin position="839"/>
        <end position="860"/>
    </location>
</feature>
<feature type="strand" evidence="32">
    <location>
        <begin position="871"/>
        <end position="876"/>
    </location>
</feature>
<feature type="strand" evidence="32">
    <location>
        <begin position="889"/>
        <end position="895"/>
    </location>
</feature>
<feature type="strand" evidence="32">
    <location>
        <begin position="901"/>
        <end position="905"/>
    </location>
</feature>
<feature type="strand" evidence="32">
    <location>
        <begin position="913"/>
        <end position="918"/>
    </location>
</feature>
<feature type="turn" evidence="32">
    <location>
        <begin position="924"/>
        <end position="928"/>
    </location>
</feature>
<feature type="strand" evidence="32">
    <location>
        <begin position="931"/>
        <end position="949"/>
    </location>
</feature>
<feature type="strand" evidence="32">
    <location>
        <begin position="952"/>
        <end position="959"/>
    </location>
</feature>
<feature type="strand" evidence="32">
    <location>
        <begin position="965"/>
        <end position="968"/>
    </location>
</feature>
<feature type="strand" evidence="32">
    <location>
        <begin position="971"/>
        <end position="975"/>
    </location>
</feature>
<feature type="strand" evidence="32">
    <location>
        <begin position="987"/>
        <end position="994"/>
    </location>
</feature>
<feature type="strand" evidence="32">
    <location>
        <begin position="1014"/>
        <end position="1019"/>
    </location>
</feature>
<feature type="helix" evidence="32">
    <location>
        <begin position="1051"/>
        <end position="1057"/>
    </location>
</feature>
<feature type="helix" evidence="32">
    <location>
        <begin position="1063"/>
        <end position="1066"/>
    </location>
</feature>
<feature type="helix" evidence="32">
    <location>
        <begin position="1068"/>
        <end position="1070"/>
    </location>
</feature>
<feature type="strand" evidence="32">
    <location>
        <begin position="1072"/>
        <end position="1074"/>
    </location>
</feature>
<feature type="turn" evidence="32">
    <location>
        <begin position="1075"/>
        <end position="1078"/>
    </location>
</feature>
<feature type="strand" evidence="32">
    <location>
        <begin position="1079"/>
        <end position="1081"/>
    </location>
</feature>
<feature type="strand" evidence="32">
    <location>
        <begin position="1086"/>
        <end position="1093"/>
    </location>
</feature>
<feature type="helix" evidence="32">
    <location>
        <begin position="1096"/>
        <end position="1098"/>
    </location>
</feature>
<feature type="turn" evidence="32">
    <location>
        <begin position="1102"/>
        <end position="1104"/>
    </location>
</feature>
<feature type="strand" evidence="32">
    <location>
        <begin position="1108"/>
        <end position="1117"/>
    </location>
</feature>
<feature type="strand" evidence="32">
    <location>
        <begin position="1126"/>
        <end position="1136"/>
    </location>
</feature>
<feature type="strand" evidence="32">
    <location>
        <begin position="1138"/>
        <end position="1141"/>
    </location>
</feature>
<feature type="strand" evidence="32">
    <location>
        <begin position="1145"/>
        <end position="1148"/>
    </location>
</feature>
<feature type="strand" evidence="32">
    <location>
        <begin position="1150"/>
        <end position="1152"/>
    </location>
</feature>
<feature type="strand" evidence="32">
    <location>
        <begin position="1154"/>
        <end position="1158"/>
    </location>
</feature>
<feature type="strand" evidence="32">
    <location>
        <begin position="1160"/>
        <end position="1169"/>
    </location>
</feature>
<feature type="strand" evidence="32">
    <location>
        <begin position="1177"/>
        <end position="1180"/>
    </location>
</feature>
<feature type="strand" evidence="32">
    <location>
        <begin position="1185"/>
        <end position="1188"/>
    </location>
</feature>
<feature type="strand" evidence="32">
    <location>
        <begin position="1198"/>
        <end position="1202"/>
    </location>
</feature>
<feature type="helix" evidence="32">
    <location>
        <begin position="1216"/>
        <end position="1250"/>
    </location>
</feature>
<name>POLS_EEVV8</name>
<reference key="1">
    <citation type="journal article" date="1986" name="J. Gen. Virol.">
        <title>Molecular determinants of alphavirus neurovirulence: nucleotide and deduced protein sequence changes during attenuation of Venezuelan equine encephalitis virus.</title>
        <authorList>
            <person name="Johnson B.J.B."/>
            <person name="Kinney R.M."/>
            <person name="Kost C.L."/>
            <person name="Trent D.W."/>
        </authorList>
    </citation>
    <scope>NUCLEOTIDE SEQUENCE [MRNA]</scope>
</reference>
<reference evidence="15 16" key="2">
    <citation type="journal article" date="2011" name="EMBO J.">
        <title>4.4 A cryo-EM structure of an enveloped alphavirus Venezuelan equine encephalitis virus.</title>
        <authorList>
            <person name="Zhang R."/>
            <person name="Hryc C.F."/>
            <person name="Cong Y."/>
            <person name="Liu X."/>
            <person name="Jakana J."/>
            <person name="Gorchakov R."/>
            <person name="Baker M.L."/>
            <person name="Weaver S.C."/>
            <person name="Chiu W."/>
        </authorList>
    </citation>
    <scope>STRUCTURE BY ELECTRON MICROSCOPY (4.40 ANGSTROMS) OF 114-757 AND 813-1254</scope>
</reference>
<reference evidence="31" key="3">
    <citation type="journal article" date="2021" name="Nature">
        <title>Structure of Venezuelan equine encephalitis virus in complex with the LDLRAD3 receptor.</title>
        <authorList>
            <person name="Basore K."/>
            <person name="Ma H."/>
            <person name="Kafai N.M."/>
            <person name="Mackin S."/>
            <person name="Kim A.S."/>
            <person name="Nelson C.A."/>
            <person name="Diamond M.S."/>
            <person name="Fremont D.H."/>
        </authorList>
    </citation>
    <scope>STRUCTURE BY ELECTRON MICROSCOPY (4.20 ANGSTROMS) OF 114-275; 335-757 AND 814-1255 IN COMPLEX WITH HOST RECEPTOR LDLRAD3</scope>
    <scope>DISULFIDE BONDS</scope>
    <scope>INTERACTION WITH HOST RECEPTOR LDLRAD3 (SPIKE GLYCOPROTEIN E1)</scope>
    <scope>INTERACTION WITH HOST RECEPTOR LDLRAD3 (SPIKE GLYCOPROTEIN E2)</scope>
    <source>
        <strain>Isolate TC-83</strain>
    </source>
</reference>
<reference evidence="17 18 19 20 21 22" key="4">
    <citation type="journal article" date="2021" name="Nature">
        <title>Structure of Venezuelan equine encephalitis virus with its receptor LDLRAD3.</title>
        <authorList>
            <person name="Ma B."/>
            <person name="Huang C."/>
            <person name="Ma J."/>
            <person name="Xiang Y."/>
            <person name="Zhang X."/>
        </authorList>
    </citation>
    <scope>STRUCTURE BY ELECTRON MICROSCOPY (3.00 ANGSTROMS) OF 1-757 AND 813-1254 IN COMPLEX WITH HOST RECEPTOR LDLRAD3</scope>
    <scope>DISULFIDE BONDS</scope>
    <scope>INTERACTION WITH HOST RECEPTOR LDLRAD3 (SPIKE GLYCOPROTEIN E1)</scope>
    <scope>INTERACTION WITH HOST RECEPTOR LDLRAD3 (SPIKE GLYCOPROTEIN E2)</scope>
    <source>
        <strain>Isolate TC-83</strain>
    </source>
</reference>
<reference evidence="23 24 25" key="5">
    <citation type="journal article" date="2022" name="J. Exp. Med.">
        <title>Neutralizing antibodies protect mice against Venezuelan equine encephalitis virus aerosol challenge.</title>
        <authorList>
            <person name="Kafai N.M."/>
            <person name="Williamson L.E."/>
            <person name="Binshtein E."/>
            <person name="Sukupolvi-Petty S."/>
            <person name="Gardner C.L."/>
            <person name="Liu J."/>
            <person name="Mackin S."/>
            <person name="Kim A.S."/>
            <person name="Kose N."/>
            <person name="Carnahan R.H."/>
            <person name="Jung A."/>
            <person name="Droit L."/>
            <person name="Reed D.S."/>
            <person name="Handley S.A."/>
            <person name="Klimstra W.B."/>
            <person name="Crowe J.E."/>
            <person name="Diamond M.S."/>
        </authorList>
    </citation>
    <scope>STRUCTURE BY ELECTRON MICROSCOPY (3.20 ANGSTROMS) OF 1-275; 335-757 AND 813-1254</scope>
    <scope>DISULFIDE BONDS</scope>
</reference>
<reference evidence="26 27 28 29" key="6">
    <citation type="journal article" date="2023" name="Cell">
        <title>Vaccine elicitation and structural basis for antibody protection against alphaviruses.</title>
        <authorList>
            <person name="Sutton M.S."/>
            <person name="Pletnev S."/>
            <person name="Callahan V."/>
            <person name="Ko S."/>
            <person name="Tsybovsky Y."/>
            <person name="Bylund T."/>
            <person name="Casner R.G."/>
            <person name="Cerutti G."/>
            <person name="Gardner C.L."/>
            <person name="Guirguis V."/>
            <person name="Verardi R."/>
            <person name="Zhang B."/>
            <person name="Ambrozak D."/>
            <person name="Beddall M."/>
            <person name="Lei H."/>
            <person name="Yang E.S."/>
            <person name="Liu T."/>
            <person name="Henry A.R."/>
            <person name="Rawi R."/>
            <person name="Schon A."/>
            <person name="Schramm C.A."/>
            <person name="Shen C.H."/>
            <person name="Shi W."/>
            <person name="Stephens T."/>
            <person name="Yang Y."/>
            <person name="Florez M.B."/>
            <person name="Ledgerwood J.E."/>
            <person name="Burke C.W."/>
            <person name="Shapiro L."/>
            <person name="Fox J.M."/>
            <person name="Kwong P.D."/>
            <person name="Roederer M."/>
        </authorList>
    </citation>
    <scope>STRUCTURE BY ELECTRON MICROSCOPY (3.30 ANGSTROMS) OF 335-679 AND 813-1214</scope>
    <scope>DISULFIDE BONDS</scope>
</reference>
<evidence type="ECO:0000250" key="1"/>
<evidence type="ECO:0000250" key="2">
    <source>
        <dbReference type="UniProtKB" id="P03315"/>
    </source>
</evidence>
<evidence type="ECO:0000250" key="3">
    <source>
        <dbReference type="UniProtKB" id="P03316"/>
    </source>
</evidence>
<evidence type="ECO:0000250" key="4">
    <source>
        <dbReference type="UniProtKB" id="P09592"/>
    </source>
</evidence>
<evidence type="ECO:0000250" key="5">
    <source>
        <dbReference type="UniProtKB" id="P27284"/>
    </source>
</evidence>
<evidence type="ECO:0000250" key="6">
    <source>
        <dbReference type="UniProtKB" id="P36329"/>
    </source>
</evidence>
<evidence type="ECO:0000250" key="7">
    <source>
        <dbReference type="UniProtKB" id="Q5XXP3"/>
    </source>
</evidence>
<evidence type="ECO:0000250" key="8">
    <source>
        <dbReference type="UniProtKB" id="Q86925"/>
    </source>
</evidence>
<evidence type="ECO:0000250" key="9">
    <source>
        <dbReference type="UniProtKB" id="Q8JUX5"/>
    </source>
</evidence>
<evidence type="ECO:0000255" key="10"/>
<evidence type="ECO:0000255" key="11">
    <source>
        <dbReference type="PROSITE-ProRule" id="PRU01027"/>
    </source>
</evidence>
<evidence type="ECO:0000256" key="12">
    <source>
        <dbReference type="SAM" id="MobiDB-lite"/>
    </source>
</evidence>
<evidence type="ECO:0000269" key="13">
    <source>
    </source>
</evidence>
<evidence type="ECO:0000269" key="14">
    <source>
    </source>
</evidence>
<evidence type="ECO:0007744" key="15">
    <source>
        <dbReference type="PDB" id="3J0C"/>
    </source>
</evidence>
<evidence type="ECO:0007744" key="16">
    <source>
        <dbReference type="PDB" id="3J0G"/>
    </source>
</evidence>
<evidence type="ECO:0007744" key="17">
    <source>
        <dbReference type="PDB" id="7FFE"/>
    </source>
</evidence>
<evidence type="ECO:0007744" key="18">
    <source>
        <dbReference type="PDB" id="7FFF"/>
    </source>
</evidence>
<evidence type="ECO:0007744" key="19">
    <source>
        <dbReference type="PDB" id="7FFL"/>
    </source>
</evidence>
<evidence type="ECO:0007744" key="20">
    <source>
        <dbReference type="PDB" id="7FFN"/>
    </source>
</evidence>
<evidence type="ECO:0007744" key="21">
    <source>
        <dbReference type="PDB" id="7FFO"/>
    </source>
</evidence>
<evidence type="ECO:0007744" key="22">
    <source>
        <dbReference type="PDB" id="7FFQ"/>
    </source>
</evidence>
<evidence type="ECO:0007744" key="23">
    <source>
        <dbReference type="PDB" id="7SFU"/>
    </source>
</evidence>
<evidence type="ECO:0007744" key="24">
    <source>
        <dbReference type="PDB" id="7SFV"/>
    </source>
</evidence>
<evidence type="ECO:0007744" key="25">
    <source>
        <dbReference type="PDB" id="7SFW"/>
    </source>
</evidence>
<evidence type="ECO:0007744" key="26">
    <source>
        <dbReference type="PDB" id="8DEQ"/>
    </source>
</evidence>
<evidence type="ECO:0007744" key="27">
    <source>
        <dbReference type="PDB" id="8DER"/>
    </source>
</evidence>
<evidence type="ECO:0007744" key="28">
    <source>
        <dbReference type="PDB" id="8EEU"/>
    </source>
</evidence>
<evidence type="ECO:0007744" key="29">
    <source>
        <dbReference type="PDB" id="8EEV"/>
    </source>
</evidence>
<evidence type="ECO:0007829" key="30">
    <source>
        <dbReference type="PDB" id="1EP5"/>
    </source>
</evidence>
<evidence type="ECO:0007829" key="31">
    <source>
        <dbReference type="PDB" id="7N1I"/>
    </source>
</evidence>
<evidence type="ECO:0007829" key="32">
    <source>
        <dbReference type="PDB" id="7SFW"/>
    </source>
</evidence>
<comment type="function">
    <molecule>Capsid protein</molecule>
    <text evidence="2 3 4 5 6">Forms an icosahedral capsid with a T=4 symmetry composed of 240 copies of the capsid protein surrounded by a lipid membrane through which penetrate 80 spikes composed of trimers of E1-E2 heterodimers (By similarity). The capsid protein binds to the viral RNA genome at a site adjacent to a ribosome binding site for viral genome translation following genome release (By similarity). Possesses a protease activity that results in its autocatalytic cleavage from the nascent structural protein (By similarity). Following its self-cleavage, the capsid protein transiently associates with ribosomes, and within several minutes the protein binds to viral RNA and rapidly assembles into icosahedric core particles (By similarity). The resulting nucleocapsid eventually associates with the cytoplasmic domain of the spike glycoprotein E2 at the cell membrane, leading to budding and formation of mature virions (By similarity). In case of infection, new virions attach to target cells and after clathrin-mediated endocytosis their membrane fuses with the host endosomal membrane (By similarity). This leads to the release of the nucleocapsid into the cytoplasm, followed by an uncoating event necessary for the genomic RNA to become accessible (By similarity). The uncoating might be triggered by the interaction of capsid proteins with ribosomes (By similarity). Binding of ribosomes would release the genomic RNA since the same region is genomic RNA-binding and ribosome-binding (By similarity). Specifically inhibits interleukin-1 receptor-associated kinase 1/IRAK1-dependent signaling during viral entry, representing a means by which the alphaviruses may evade innate immune detection and activation prior to viral gene expression (By similarity). Inhibits host transcription (By similarity). Forms a tetrameric complex with XPO1/CRM1 and the nuclear import receptor importin (By similarity). This complex blocks the central channel of host nuclear pores thereby inhibiting the receptor-mediated nuclear transport and thus the host mRNA and rRNA transcription (By similarity). The inhibition of transcription is linked to a cytopathic effect on the host cell (By similarity).</text>
</comment>
<comment type="function">
    <molecule>Assembly protein E3</molecule>
    <text evidence="2">Provides the signal sequence for the translocation of the precursor of protein E3/E2 to the host endoplasmic reticulum. Furin-cleaved E3 remains associated with spike glycoprotein E1 and mediates pH protection of the latter during the transport via the secretory pathway. After virion release from the host cell, the assembly protein E3 is gradually released in the extracellular space.</text>
</comment>
<comment type="function">
    <molecule>Spike glycoprotein E2</molecule>
    <text evidence="2 4">Plays a role in viral attachment to target host cell, by binding to the cell receptor LDLRAD3 (By similarity). Synthesized as a p62 precursor which is processed by furin at the cell membrane just before virion budding, giving rise to E2-E1 heterodimer. The p62-E1 heterodimer is stable, whereas E2-E1 is unstable and dissociate at low pH. p62 is processed at the last step, presumably to avoid E1 fusion activation before its final export to cell surface. E2 C-terminus contains a transitory transmembrane that would be disrupted by palmitoylation, resulting in reorientation of the C-terminal tail from lumenal to cytoplasmic side. This step is critical since E2 C-terminus is involved in budding by interacting with capsid proteins. This release of E2 C-terminus in cytoplasm occurs lately in protein export, and precludes premature assembly of particles at the endoplasmic reticulum membrane.</text>
</comment>
<comment type="function">
    <molecule>6K protein</molecule>
    <text evidence="2 3">Acts as a viroporin that participates in virus glycoprotein processing and transport to the plasma membrane, cell permeabilization and budding of viral particles (By similarity). Disrupts the calcium homeostasis of the cell, probably at the endoplasmic reticulum level (By similarity). This leads to cytoplasmic calcium elevation (By similarity). Because of its lipophilic properties, the 6K protein is postulated to influence the selection of lipids that interact with the transmembrane domains of the glycoproteins, which, in turn, affects the deformability of the bilayer required for the extreme curvature that occurs as budding proceeds. Present in low amount in virions, about 3% compared to viral glycoproteins (By similarity).</text>
</comment>
<comment type="function">
    <molecule>Spike glycoprotein E1</molecule>
    <text evidence="3 4">Class II viral fusion protein. Fusion activity is inactive as long as E1 is bound to E2 in mature virion. After virus attachment to cell receptor LDLRAD3 and endocytosis, acidification of the endosome induce dissociation of E1/E2 heterodimer and concomitant trimerization of the E1 subunits (By similarity). This E1 trimer is fusion active, and promotes release of viral nucleocapsid in cytoplasm after endosome and viral membrane fusion. Efficient fusion requires the presence of cholesterol and sphingolipid in the target membrane (By similarity).</text>
</comment>
<comment type="catalytic activity">
    <reaction evidence="3">
        <text>Autocatalytic release of the core protein from the N-terminus of the togavirus structural polyprotein by hydrolysis of a -Trp-|-Ser- bond.</text>
        <dbReference type="EC" id="3.4.21.90"/>
    </reaction>
</comment>
<comment type="subunit">
    <molecule>Capsid protein</molecule>
    <text evidence="3 4 8 9">Homodimer (By similarity). Homomultimer (By similarity). Interacts with host karyopherin KPNA4; this interaction allows the nuclear import of the viral capsid protein (By similarity). Interacts with spike glycoprotein E2 (By similarity). Interacts with host IRAK1; the interaction leads to inhibition of IRAK1-dependent signaling (By similarity). Part of a tetrameric complex composed of host CRM1, host importin alpha/beta dimer and the viral capsid; this complex blocks the receptor-mediated transport through the nuclear pore (By similarity). Interacts with host phosphatase PPP1CA; this interaction dephosphorylates the capsid protein, which increases its ability to bind to the viral genome (By similarity).</text>
</comment>
<comment type="subunit">
    <molecule>Precursor of protein E3/E2</molecule>
    <text evidence="2 3 4">The precursor of protein E3/E2 and E1 form a heterodimer shortly after synthesis (By similarity).</text>
</comment>
<comment type="subunit">
    <molecule>Spike glycoprotein E1</molecule>
    <text evidence="3 9 13 14">Interacts with spike glycoprotein E2 (By similarity). The precursor of protein E3/E2 and E1 form a heterodimer shortly after synthesis (By similarity). Processing of the precursor of protein E3/E2 into E2 and E3 results in a heterodimer of the spike glycoproteins E2 and E1 (By similarity). Spike at virion surface are constituted of three E2-E1 heterodimers (By similarity). After target cell attachment and endocytosis, E1 change conformation to form homotrimers (By similarity). Interacts with 6K protein (By similarity). Interacts (via fusion peptide loop) with host LDLRAD3 (via domain LDL-receptor class A 1); this interaction mediates viral entry to the host cell (PubMed:34646020, PubMed:34646021). 2 adjacent E2-E1 heterodimers in the trimeric spike interact with host LDLRAD3 (PubMed:34646021).</text>
</comment>
<comment type="subunit">
    <molecule>Spike glycoprotein E2</molecule>
    <text evidence="2 3 4 13 14">Interacts with spike glycoprotein E1 (By similarity). Processing of the precursor of protein E3/E2 into E2 and E3 results in a heterodimer of the spike glycoproteins E2 and E1 (By similarity). Spike at virion surface are constituted of a trimer of E2-E1 heterodimers (By similarity). Interacts with 6K protein (By similarity). Interacts with host LDLRAD3 (via domain LDL-receptor class A 1); this interaction mediates viral entry to the host cell (PubMed:34646020, PubMed:34646021). 2 adjacent E2-E1 heterodimers in the trimeric spike interact with host LDLRAD3 (PubMed:34646021).</text>
</comment>
<comment type="subunit">
    <molecule>6K protein</molecule>
    <text evidence="3 7">Oligomer (By similarity). Interacts with spike glycoprotein E1. Interacts with spike glycoprotein E2 (By similarity).</text>
</comment>
<comment type="subcellular location">
    <molecule>Capsid protein</molecule>
    <subcellularLocation>
        <location evidence="3">Virion</location>
    </subcellularLocation>
    <subcellularLocation>
        <location evidence="4">Host cytoplasm</location>
    </subcellularLocation>
    <subcellularLocation>
        <location evidence="3">Host cell membrane</location>
    </subcellularLocation>
    <subcellularLocation>
        <location evidence="4">Host nucleus</location>
    </subcellularLocation>
</comment>
<comment type="subcellular location">
    <molecule>Spike glycoprotein E2</molecule>
    <subcellularLocation>
        <location evidence="9">Virion membrane</location>
        <topology evidence="10">Single-pass type I membrane protein</topology>
    </subcellularLocation>
    <subcellularLocation>
        <location evidence="3">Host cell membrane</location>
        <topology evidence="9">Single-pass type I membrane protein</topology>
    </subcellularLocation>
</comment>
<comment type="subcellular location">
    <molecule>6K protein</molecule>
    <subcellularLocation>
        <location evidence="3">Host cell membrane</location>
        <topology evidence="10">Multi-pass membrane protein</topology>
    </subcellularLocation>
    <subcellularLocation>
        <location evidence="3">Virion membrane</location>
        <topology evidence="10">Multi-pass membrane protein</topology>
    </subcellularLocation>
</comment>
<comment type="subcellular location">
    <molecule>Spike glycoprotein E1</molecule>
    <subcellularLocation>
        <location evidence="9">Virion membrane</location>
        <topology evidence="10">Single-pass type I membrane protein</topology>
    </subcellularLocation>
    <subcellularLocation>
        <location evidence="3 9">Host cell membrane</location>
        <topology evidence="10">Single-pass type I membrane protein</topology>
    </subcellularLocation>
</comment>
<comment type="domain">
    <text evidence="2">Structural polyprotein: As soon as the capsid protein has been autocleaved, an internal uncleaved signal peptide directs the remaining polyprotein to the endoplasmic reticulum.</text>
</comment>
<comment type="domain">
    <molecule>Capsid protein</molecule>
    <text evidence="3 4">The very N-terminus plays a role in the particle assembly process (By similarity). The N-terminus also contains a nuclear localization signal and a supraphysiological nuclear export signal (supraNES), which is an unusually strong NES that mediates host CRM1 binding in the absence of RanGTP and thus can bind CRM1, not only in the nucleus, but also in the cytoplasm (By similarity). The C-terminus functions as a protease during translation to cleave itself from the translating structural polyprotein (By similarity).</text>
</comment>
<comment type="PTM">
    <text evidence="2">Structural polyprotein: Specific enzymatic cleavages in vivo yield mature proteins. Capsid protein is auto-cleaved during polyprotein translation, unmasking a signal peptide at the N-terminus of the precursor of E3/E2. The remaining polyprotein is then targeted to the host endoplasmic reticulum, where host signal peptidase cleaves it into pE2, 6K and E1 proteins. pE2 is further processed to mature E3 and E2 by host furin in trans-Golgi vesicle.</text>
</comment>
<comment type="PTM">
    <molecule>Capsid protein</molecule>
    <text evidence="4">Phosphorylated on serine and threonine residues.</text>
</comment>
<comment type="PTM">
    <molecule>Spike glycoprotein E2</molecule>
    <text evidence="2">Palmitoylated via thioester bonds. These palmitoylations may induce disruption of the C-terminus transmembrane. This would result in the reorientation of E2 C-terminus from lumenal to cytoplasmic side.</text>
</comment>
<comment type="PTM">
    <molecule>Spike glycoprotein E1</molecule>
    <text evidence="2">N-glycosylated.</text>
</comment>
<comment type="PTM">
    <molecule>Spike glycoprotein E2</molecule>
    <text evidence="2">N-glycosylated.</text>
</comment>
<comment type="PTM">
    <molecule>Assembly protein E3</molecule>
    <text evidence="2">N-glycosylated.</text>
</comment>
<comment type="PTM">
    <molecule>6K protein</molecule>
    <text evidence="2">Palmitoylated via thioester bonds.</text>
</comment>
<comment type="miscellaneous">
    <text evidence="8">Structural polyprotein: Translated from a subgenomic RNA synthesized during togavirus replication.</text>
</comment>
<sequence>MFPFQPMYPMQPMPYRNPFAAPRRPWFPRTDPFLAMQVQELTRSMANLTFKQRRDAPPEGPSAKKPKKEASQKQKGGGQGKKKKNQGKKKAKTGPPNPKAQNGNKKKTNKKPGKRQRMVMKLESDKTFPIMLEGKINGYACVVGGKLFRPMHVEGKIDNDVLAALKTKKASKYDLEYADVPQNMRADTFKYTHEKPQGYYSWHHGAVQYENGRFTVPKGVGAKGDSGRPILDNQGRVVAIVLGGVNEGSRTALSVVMWNEKGVTVKYTPENCEQWSLVTTMCLLANVTFPCAQPPICYDRKPAETLAMLSVNVDNPGYDELLEAAVKCPGRKRRSTEELFNEYKLTRPYMARCIRCAVGSCHSPIAIEAVKSDGHDGYVRLQTSSQYGLDSSGNLKGRTMRYDMHGTIKEIPLHQVSLYTSRPCHIVDGHGYFLLARCPAGDSITMEFKKDSVRHSCSVPYEVKFNPVGRELYTHPPEHGVEQACQVYAHDAQNRGAYVEMHLPGSEVDSSLVSLSGSSVTVTPPDGTSALVECECGGTKISETINKTKQFSQCTKKEQCRAYRLQNDKWVYNSDKLPKAAGATLKGKLHVPFLLADGKCTVPLAPEPMITFGFRSVSLKLHPKNPTYLITRQLADEPHYTHELISEPAVRNFTVTEKGWEFVWGNHPPKRFWAQETAPGNPHGLPHEVITHYYHRYPMSTILGLSICAAIATVSVAASTWLFCRSRVACLTPYRLTPNARIPFCLAVLCCARTARAETTWESLDHLWNNNQQMFWIQLLIPLAALIVVTRLLRCVCCVVPFLVMAGAAAPAYEHATTMPSQAGISYNTIVNRAGYAPLPISITPTKIKLIPTVNLEYVTCHYKTGMDSPAIKCCGSQECTPTYRPDEQCKVFTGVYPFMWGGAYCFCDTENTQVSKAYVMKSDDCLADHAEAYKAHTASVQAFLNITVGEHSIVTTVYVNGETPVNFNGVKITAGPLSTAWTPFDRKIVQYAGEIYNYDFPEYGAGQPGAFGDIQSRTVSSSDLYANTNLVLQRPKAGAIHVPYTQAPSGFEQWKKDKAPSLKFTAPFGCEIYTNPIRAENCAVGSIPLAFDIPDALFTRVSETPTLSAAECTLNECVYSSDFGGIATVKYSASKSGKCAVHVPSGTATLKEAAVELTEQGSATIHFSTANIHPEFRLQICTSYVTCKGDCHPPKDHIVTHPQYHAQTFTAAVSKTAWTWLTSLLGGSAVIIIIGLVLATIVAMYVLTNQKHN</sequence>
<proteinExistence type="evidence at protein level"/>
<organismHost>
    <name type="scientific">Bos taurus</name>
    <name type="common">Bovine</name>
    <dbReference type="NCBI Taxonomy" id="9913"/>
</organismHost>
<organismHost>
    <name type="scientific">Didelphis marsupialis</name>
    <name type="common">Southern opossum</name>
    <dbReference type="NCBI Taxonomy" id="9268"/>
</organismHost>
<organismHost>
    <name type="scientific">Equus asinus</name>
    <name type="common">Donkey</name>
    <name type="synonym">Equus africanus asinus</name>
    <dbReference type="NCBI Taxonomy" id="9793"/>
</organismHost>
<organismHost>
    <name type="scientific">Equus caballus</name>
    <name type="common">Horse</name>
    <dbReference type="NCBI Taxonomy" id="9796"/>
</organismHost>
<organismHost>
    <name type="scientific">Homo sapiens</name>
    <name type="common">Human</name>
    <dbReference type="NCBI Taxonomy" id="9606"/>
</organismHost>
<organismHost>
    <name type="scientific">Melanoconion</name>
    <dbReference type="NCBI Taxonomy" id="53535"/>
</organismHost>
<organismHost>
    <name type="scientific">Philander opossum</name>
    <name type="common">Gray four-eyed opossum</name>
    <dbReference type="NCBI Taxonomy" id="9272"/>
</organismHost>
<organismHost>
    <name type="scientific">Proechimys</name>
    <dbReference type="NCBI Taxonomy" id="10162"/>
</organismHost>
<organismHost>
    <name type="scientific">Sigmodon hispidus</name>
    <name type="common">Hispid cotton rat</name>
    <dbReference type="NCBI Taxonomy" id="42415"/>
</organismHost>
<protein>
    <recommendedName>
        <fullName>Structural polyprotein</fullName>
    </recommendedName>
    <alternativeName>
        <fullName>p130</fullName>
    </alternativeName>
    <component>
        <recommendedName>
            <fullName>Capsid protein</fullName>
            <ecNumber evidence="2">3.4.21.90</ecNumber>
        </recommendedName>
        <alternativeName>
            <fullName>Coat protein</fullName>
            <shortName>C</shortName>
        </alternativeName>
    </component>
    <component>
        <recommendedName>
            <fullName>Precursor of protein E3/E2</fullName>
        </recommendedName>
        <alternativeName>
            <fullName>p62</fullName>
        </alternativeName>
        <alternativeName>
            <fullName>pE2</fullName>
        </alternativeName>
    </component>
    <component>
        <recommendedName>
            <fullName>Assembly protein E3</fullName>
        </recommendedName>
    </component>
    <component>
        <recommendedName>
            <fullName>Spike glycoprotein E2</fullName>
        </recommendedName>
        <alternativeName>
            <fullName>E2 envelope glycoprotein</fullName>
        </alternativeName>
    </component>
    <component>
        <recommendedName>
            <fullName>6K protein</fullName>
        </recommendedName>
    </component>
    <component>
        <recommendedName>
            <fullName>Spike glycoprotein E1</fullName>
        </recommendedName>
        <alternativeName>
            <fullName>E1 envelope glycoprotein</fullName>
        </alternativeName>
    </component>
</protein>
<organism>
    <name type="scientific">Venezuelan equine encephalitis virus (strain TC-83)</name>
    <name type="common">VEEV</name>
    <dbReference type="NCBI Taxonomy" id="11037"/>
    <lineage>
        <taxon>Viruses</taxon>
        <taxon>Riboviria</taxon>
        <taxon>Orthornavirae</taxon>
        <taxon>Kitrinoviricota</taxon>
        <taxon>Alsuviricetes</taxon>
        <taxon>Martellivirales</taxon>
        <taxon>Togaviridae</taxon>
        <taxon>Alphavirus</taxon>
        <taxon>Venezuelan equine encephalitis virus</taxon>
    </lineage>
</organism>